<keyword id="KW-0963">Cytoplasm</keyword>
<keyword id="KW-0489">Methyltransferase</keyword>
<keyword id="KW-1185">Reference proteome</keyword>
<keyword id="KW-0698">rRNA processing</keyword>
<keyword id="KW-0949">S-adenosyl-L-methionine</keyword>
<keyword id="KW-0808">Transferase</keyword>
<comment type="function">
    <text evidence="1">Specifically methylates the guanine in position 1207 of 16S rRNA in the 30S particle.</text>
</comment>
<comment type="catalytic activity">
    <reaction evidence="1">
        <text>guanosine(1207) in 16S rRNA + S-adenosyl-L-methionine = N(2)-methylguanosine(1207) in 16S rRNA + S-adenosyl-L-homocysteine + H(+)</text>
        <dbReference type="Rhea" id="RHEA:42736"/>
        <dbReference type="Rhea" id="RHEA-COMP:10213"/>
        <dbReference type="Rhea" id="RHEA-COMP:10214"/>
        <dbReference type="ChEBI" id="CHEBI:15378"/>
        <dbReference type="ChEBI" id="CHEBI:57856"/>
        <dbReference type="ChEBI" id="CHEBI:59789"/>
        <dbReference type="ChEBI" id="CHEBI:74269"/>
        <dbReference type="ChEBI" id="CHEBI:74481"/>
        <dbReference type="EC" id="2.1.1.172"/>
    </reaction>
</comment>
<comment type="subunit">
    <text evidence="1">Monomer.</text>
</comment>
<comment type="subcellular location">
    <subcellularLocation>
        <location evidence="1">Cytoplasm</location>
    </subcellularLocation>
</comment>
<comment type="similarity">
    <text evidence="1">Belongs to the methyltransferase superfamily. RsmC family.</text>
</comment>
<protein>
    <recommendedName>
        <fullName evidence="1">Ribosomal RNA small subunit methyltransferase C</fullName>
        <ecNumber evidence="1">2.1.1.172</ecNumber>
    </recommendedName>
    <alternativeName>
        <fullName evidence="1">16S rRNA m2G1207 methyltransferase</fullName>
    </alternativeName>
    <alternativeName>
        <fullName evidence="1">rRNA (guanine-N(2)-)-methyltransferase RsmC</fullName>
    </alternativeName>
</protein>
<organism>
    <name type="scientific">Salmonella typhimurium (strain LT2 / SGSC1412 / ATCC 700720)</name>
    <dbReference type="NCBI Taxonomy" id="99287"/>
    <lineage>
        <taxon>Bacteria</taxon>
        <taxon>Pseudomonadati</taxon>
        <taxon>Pseudomonadota</taxon>
        <taxon>Gammaproteobacteria</taxon>
        <taxon>Enterobacterales</taxon>
        <taxon>Enterobacteriaceae</taxon>
        <taxon>Salmonella</taxon>
    </lineage>
</organism>
<gene>
    <name evidence="1" type="primary">rsmC</name>
    <name type="ordered locus">STM4556</name>
</gene>
<accession>Q8ZJW6</accession>
<reference key="1">
    <citation type="journal article" date="2001" name="Nature">
        <title>Complete genome sequence of Salmonella enterica serovar Typhimurium LT2.</title>
        <authorList>
            <person name="McClelland M."/>
            <person name="Sanderson K.E."/>
            <person name="Spieth J."/>
            <person name="Clifton S.W."/>
            <person name="Latreille P."/>
            <person name="Courtney L."/>
            <person name="Porwollik S."/>
            <person name="Ali J."/>
            <person name="Dante M."/>
            <person name="Du F."/>
            <person name="Hou S."/>
            <person name="Layman D."/>
            <person name="Leonard S."/>
            <person name="Nguyen C."/>
            <person name="Scott K."/>
            <person name="Holmes A."/>
            <person name="Grewal N."/>
            <person name="Mulvaney E."/>
            <person name="Ryan E."/>
            <person name="Sun H."/>
            <person name="Florea L."/>
            <person name="Miller W."/>
            <person name="Stoneking T."/>
            <person name="Nhan M."/>
            <person name="Waterston R."/>
            <person name="Wilson R.K."/>
        </authorList>
    </citation>
    <scope>NUCLEOTIDE SEQUENCE [LARGE SCALE GENOMIC DNA]</scope>
    <source>
        <strain>LT2 / SGSC1412 / ATCC 700720</strain>
    </source>
</reference>
<evidence type="ECO:0000255" key="1">
    <source>
        <dbReference type="HAMAP-Rule" id="MF_01862"/>
    </source>
</evidence>
<sequence length="342" mass="37616">MSAFTPASEVLLRHSDDFEQSRILFAGDLQDDLPARFECAASRAHTQQFHHWQVLSRQMGDNVRFSLVAQASDVADCDTLIYYWPKNKPEAQFQLMNILSLMPSGVDVFVVGENRSGVRSAEPMLADYAPLNKVDSARRCGLYHGRLEKQPQFSLESWWAEYNIDGLTIKTLPGVFSRDGLDVGSQLLLSTLTPHTKGKVLDVGCGAGVLSAALASHSPKVRLTLCDVSAPAVEASRATLAANGLEGEVFASNVFSEVKGRFDMIISNPPFHDGMQTSLDAAQTLIRGAVRHLNSGGELRIVANAFLPYPKILDETFGFHEVIAQTGRFKVYRTVMTRQAKK</sequence>
<proteinExistence type="inferred from homology"/>
<dbReference type="EC" id="2.1.1.172" evidence="1"/>
<dbReference type="EMBL" id="AE006468">
    <property type="protein sequence ID" value="AAL23371.1"/>
    <property type="molecule type" value="Genomic_DNA"/>
</dbReference>
<dbReference type="RefSeq" id="NP_463412.1">
    <property type="nucleotide sequence ID" value="NC_003197.2"/>
</dbReference>
<dbReference type="RefSeq" id="WP_001272276.1">
    <property type="nucleotide sequence ID" value="NC_003197.2"/>
</dbReference>
<dbReference type="SMR" id="Q8ZJW6"/>
<dbReference type="STRING" id="99287.STM4556"/>
<dbReference type="PaxDb" id="99287-STM4556"/>
<dbReference type="GeneID" id="1256082"/>
<dbReference type="KEGG" id="stm:STM4556"/>
<dbReference type="PATRIC" id="fig|99287.12.peg.4797"/>
<dbReference type="HOGENOM" id="CLU_049581_0_1_6"/>
<dbReference type="OMA" id="RHCQLWQ"/>
<dbReference type="PhylomeDB" id="Q8ZJW6"/>
<dbReference type="BioCyc" id="SENT99287:STM4556-MONOMER"/>
<dbReference type="Proteomes" id="UP000001014">
    <property type="component" value="Chromosome"/>
</dbReference>
<dbReference type="GO" id="GO:0005737">
    <property type="term" value="C:cytoplasm"/>
    <property type="evidence" value="ECO:0007669"/>
    <property type="project" value="UniProtKB-SubCell"/>
</dbReference>
<dbReference type="GO" id="GO:0052914">
    <property type="term" value="F:16S rRNA (guanine(1207)-N(2))-methyltransferase activity"/>
    <property type="evidence" value="ECO:0007669"/>
    <property type="project" value="UniProtKB-EC"/>
</dbReference>
<dbReference type="GO" id="GO:0003676">
    <property type="term" value="F:nucleic acid binding"/>
    <property type="evidence" value="ECO:0007669"/>
    <property type="project" value="InterPro"/>
</dbReference>
<dbReference type="GO" id="GO:0008990">
    <property type="term" value="F:rRNA (guanine-N2-)-methyltransferase activity"/>
    <property type="evidence" value="ECO:0000318"/>
    <property type="project" value="GO_Central"/>
</dbReference>
<dbReference type="GO" id="GO:0070475">
    <property type="term" value="P:rRNA base methylation"/>
    <property type="evidence" value="ECO:0000318"/>
    <property type="project" value="GO_Central"/>
</dbReference>
<dbReference type="CDD" id="cd02440">
    <property type="entry name" value="AdoMet_MTases"/>
    <property type="match status" value="1"/>
</dbReference>
<dbReference type="FunFam" id="3.40.50.150:FF:000058">
    <property type="entry name" value="Ribosomal RNA small subunit methyltransferase C"/>
    <property type="match status" value="1"/>
</dbReference>
<dbReference type="Gene3D" id="3.40.50.150">
    <property type="entry name" value="Vaccinia Virus protein VP39"/>
    <property type="match status" value="2"/>
</dbReference>
<dbReference type="HAMAP" id="MF_01862">
    <property type="entry name" value="16SrRNA_methyltr_C"/>
    <property type="match status" value="1"/>
</dbReference>
<dbReference type="InterPro" id="IPR002052">
    <property type="entry name" value="DNA_methylase_N6_adenine_CS"/>
</dbReference>
<dbReference type="InterPro" id="IPR013675">
    <property type="entry name" value="Mtase_sm_N"/>
</dbReference>
<dbReference type="InterPro" id="IPR023543">
    <property type="entry name" value="rRNA_ssu_MeTfrase_C"/>
</dbReference>
<dbReference type="InterPro" id="IPR046977">
    <property type="entry name" value="RsmC/RlmG"/>
</dbReference>
<dbReference type="InterPro" id="IPR029063">
    <property type="entry name" value="SAM-dependent_MTases_sf"/>
</dbReference>
<dbReference type="InterPro" id="IPR007848">
    <property type="entry name" value="Small_mtfrase_dom"/>
</dbReference>
<dbReference type="NCBIfam" id="NF007023">
    <property type="entry name" value="PRK09489.1"/>
    <property type="match status" value="1"/>
</dbReference>
<dbReference type="PANTHER" id="PTHR47816">
    <property type="entry name" value="RIBOSOMAL RNA SMALL SUBUNIT METHYLTRANSFERASE C"/>
    <property type="match status" value="1"/>
</dbReference>
<dbReference type="PANTHER" id="PTHR47816:SF4">
    <property type="entry name" value="RIBOSOMAL RNA SMALL SUBUNIT METHYLTRANSFERASE C"/>
    <property type="match status" value="1"/>
</dbReference>
<dbReference type="Pfam" id="PF05175">
    <property type="entry name" value="MTS"/>
    <property type="match status" value="1"/>
</dbReference>
<dbReference type="Pfam" id="PF08468">
    <property type="entry name" value="MTS_N"/>
    <property type="match status" value="1"/>
</dbReference>
<dbReference type="SUPFAM" id="SSF53335">
    <property type="entry name" value="S-adenosyl-L-methionine-dependent methyltransferases"/>
    <property type="match status" value="1"/>
</dbReference>
<feature type="chain" id="PRO_0000369764" description="Ribosomal RNA small subunit methyltransferase C">
    <location>
        <begin position="1"/>
        <end position="342"/>
    </location>
</feature>
<name>RSMC_SALTY</name>